<sequence>MKRKYILKKNWEFQKIIDSKKQFIFPTIILYYKKSDSFQIGISIPKKFAIAVKRNYLKRQIKSILDQIRPYNLSYEMILIVRKNYLNLNFLQKQQEIKKIIERISNGKEKIK</sequence>
<dbReference type="EC" id="3.1.26.5" evidence="1"/>
<dbReference type="EMBL" id="AE017308">
    <property type="protein sequence ID" value="AAT28117.1"/>
    <property type="molecule type" value="Genomic_DNA"/>
</dbReference>
<dbReference type="RefSeq" id="WP_011265151.1">
    <property type="nucleotide sequence ID" value="NC_006908.1"/>
</dbReference>
<dbReference type="SMR" id="Q6KH14"/>
<dbReference type="STRING" id="267748.MMOB6310"/>
<dbReference type="KEGG" id="mmo:MMOB6310"/>
<dbReference type="eggNOG" id="COG0594">
    <property type="taxonomic scope" value="Bacteria"/>
</dbReference>
<dbReference type="HOGENOM" id="CLU_117179_9_1_14"/>
<dbReference type="OrthoDB" id="9810867at2"/>
<dbReference type="BRENDA" id="3.1.26.5">
    <property type="organism ID" value="10542"/>
</dbReference>
<dbReference type="Proteomes" id="UP000009072">
    <property type="component" value="Chromosome"/>
</dbReference>
<dbReference type="GO" id="GO:0030677">
    <property type="term" value="C:ribonuclease P complex"/>
    <property type="evidence" value="ECO:0007669"/>
    <property type="project" value="TreeGrafter"/>
</dbReference>
<dbReference type="GO" id="GO:0042781">
    <property type="term" value="F:3'-tRNA processing endoribonuclease activity"/>
    <property type="evidence" value="ECO:0007669"/>
    <property type="project" value="TreeGrafter"/>
</dbReference>
<dbReference type="GO" id="GO:0004526">
    <property type="term" value="F:ribonuclease P activity"/>
    <property type="evidence" value="ECO:0007669"/>
    <property type="project" value="UniProtKB-UniRule"/>
</dbReference>
<dbReference type="GO" id="GO:0000049">
    <property type="term" value="F:tRNA binding"/>
    <property type="evidence" value="ECO:0007669"/>
    <property type="project" value="UniProtKB-UniRule"/>
</dbReference>
<dbReference type="GO" id="GO:0001682">
    <property type="term" value="P:tRNA 5'-leader removal"/>
    <property type="evidence" value="ECO:0007669"/>
    <property type="project" value="UniProtKB-UniRule"/>
</dbReference>
<dbReference type="Gene3D" id="3.30.230.10">
    <property type="match status" value="1"/>
</dbReference>
<dbReference type="HAMAP" id="MF_00227">
    <property type="entry name" value="RNase_P"/>
    <property type="match status" value="1"/>
</dbReference>
<dbReference type="InterPro" id="IPR020568">
    <property type="entry name" value="Ribosomal_Su5_D2-typ_SF"/>
</dbReference>
<dbReference type="InterPro" id="IPR014721">
    <property type="entry name" value="Ribsml_uS5_D2-typ_fold_subgr"/>
</dbReference>
<dbReference type="InterPro" id="IPR000100">
    <property type="entry name" value="RNase_P"/>
</dbReference>
<dbReference type="InterPro" id="IPR020539">
    <property type="entry name" value="RNase_P_CS"/>
</dbReference>
<dbReference type="NCBIfam" id="TIGR00188">
    <property type="entry name" value="rnpA"/>
    <property type="match status" value="1"/>
</dbReference>
<dbReference type="PANTHER" id="PTHR33992">
    <property type="entry name" value="RIBONUCLEASE P PROTEIN COMPONENT"/>
    <property type="match status" value="1"/>
</dbReference>
<dbReference type="PANTHER" id="PTHR33992:SF1">
    <property type="entry name" value="RIBONUCLEASE P PROTEIN COMPONENT"/>
    <property type="match status" value="1"/>
</dbReference>
<dbReference type="Pfam" id="PF00825">
    <property type="entry name" value="Ribonuclease_P"/>
    <property type="match status" value="1"/>
</dbReference>
<dbReference type="SUPFAM" id="SSF54211">
    <property type="entry name" value="Ribosomal protein S5 domain 2-like"/>
    <property type="match status" value="1"/>
</dbReference>
<dbReference type="PROSITE" id="PS00648">
    <property type="entry name" value="RIBONUCLEASE_P"/>
    <property type="match status" value="1"/>
</dbReference>
<feature type="chain" id="PRO_0000198488" description="Ribonuclease P protein component">
    <location>
        <begin position="1"/>
        <end position="112"/>
    </location>
</feature>
<reference key="1">
    <citation type="journal article" date="2004" name="Genome Res.">
        <title>The complete genome and proteome of Mycoplasma mobile.</title>
        <authorList>
            <person name="Jaffe J.D."/>
            <person name="Stange-Thomann N."/>
            <person name="Smith C."/>
            <person name="DeCaprio D."/>
            <person name="Fisher S."/>
            <person name="Butler J."/>
            <person name="Calvo S."/>
            <person name="Elkins T."/>
            <person name="FitzGerald M.G."/>
            <person name="Hafez N."/>
            <person name="Kodira C.D."/>
            <person name="Major J."/>
            <person name="Wang S."/>
            <person name="Wilkinson J."/>
            <person name="Nicol R."/>
            <person name="Nusbaum C."/>
            <person name="Birren B."/>
            <person name="Berg H.C."/>
            <person name="Church G.M."/>
        </authorList>
    </citation>
    <scope>NUCLEOTIDE SEQUENCE [LARGE SCALE GENOMIC DNA]</scope>
    <source>
        <strain>ATCC 43663 / NCTC 11711 / 163 K</strain>
    </source>
</reference>
<organism>
    <name type="scientific">Mycoplasma mobile (strain ATCC 43663 / 163K / NCTC 11711)</name>
    <name type="common">Mesomycoplasma mobile</name>
    <dbReference type="NCBI Taxonomy" id="267748"/>
    <lineage>
        <taxon>Bacteria</taxon>
        <taxon>Bacillati</taxon>
        <taxon>Mycoplasmatota</taxon>
        <taxon>Mycoplasmoidales</taxon>
        <taxon>Metamycoplasmataceae</taxon>
        <taxon>Mesomycoplasma</taxon>
    </lineage>
</organism>
<keyword id="KW-0255">Endonuclease</keyword>
<keyword id="KW-0378">Hydrolase</keyword>
<keyword id="KW-0540">Nuclease</keyword>
<keyword id="KW-1185">Reference proteome</keyword>
<keyword id="KW-0694">RNA-binding</keyword>
<keyword id="KW-0819">tRNA processing</keyword>
<evidence type="ECO:0000255" key="1">
    <source>
        <dbReference type="HAMAP-Rule" id="MF_00227"/>
    </source>
</evidence>
<accession>Q6KH14</accession>
<gene>
    <name evidence="1" type="primary">rnpA</name>
    <name type="ordered locus">MMOB6310</name>
</gene>
<proteinExistence type="inferred from homology"/>
<name>RNPA_MYCM1</name>
<comment type="function">
    <text evidence="1">RNaseP catalyzes the removal of the 5'-leader sequence from pre-tRNA to produce the mature 5'-terminus. It can also cleave other RNA substrates such as 4.5S RNA. The protein component plays an auxiliary but essential role in vivo by binding to the 5'-leader sequence and broadening the substrate specificity of the ribozyme.</text>
</comment>
<comment type="catalytic activity">
    <reaction evidence="1">
        <text>Endonucleolytic cleavage of RNA, removing 5'-extranucleotides from tRNA precursor.</text>
        <dbReference type="EC" id="3.1.26.5"/>
    </reaction>
</comment>
<comment type="subunit">
    <text evidence="1">Consists of a catalytic RNA component (M1 or rnpB) and a protein subunit.</text>
</comment>
<comment type="similarity">
    <text evidence="1">Belongs to the RnpA family.</text>
</comment>
<protein>
    <recommendedName>
        <fullName evidence="1">Ribonuclease P protein component</fullName>
        <shortName evidence="1">RNase P protein</shortName>
        <shortName evidence="1">RNaseP protein</shortName>
        <ecNumber evidence="1">3.1.26.5</ecNumber>
    </recommendedName>
    <alternativeName>
        <fullName evidence="1">Protein C5</fullName>
    </alternativeName>
</protein>